<protein>
    <recommendedName>
        <fullName evidence="1">Small ribosomal subunit protein uS13</fullName>
    </recommendedName>
    <alternativeName>
        <fullName evidence="3">30S ribosomal protein S13</fullName>
    </alternativeName>
</protein>
<evidence type="ECO:0000255" key="1">
    <source>
        <dbReference type="HAMAP-Rule" id="MF_01315"/>
    </source>
</evidence>
<evidence type="ECO:0000256" key="2">
    <source>
        <dbReference type="SAM" id="MobiDB-lite"/>
    </source>
</evidence>
<evidence type="ECO:0000305" key="3"/>
<sequence>MARIAGIDIPREKRVEIALTYIYGIGLTRSKLILSNTGVNPDIRVKDLSDSDVQKLRVAAEDFTVEGDLRRQEGMALKRLQDIGCVRGRRHRMSLPVRGQRTRTNARTRRGSRKTVAGRKK</sequence>
<proteinExistence type="inferred from homology"/>
<accession>A2BYR5</accession>
<organism>
    <name type="scientific">Prochlorococcus marinus (strain MIT 9515)</name>
    <dbReference type="NCBI Taxonomy" id="167542"/>
    <lineage>
        <taxon>Bacteria</taxon>
        <taxon>Bacillati</taxon>
        <taxon>Cyanobacteriota</taxon>
        <taxon>Cyanophyceae</taxon>
        <taxon>Synechococcales</taxon>
        <taxon>Prochlorococcaceae</taxon>
        <taxon>Prochlorococcus</taxon>
    </lineage>
</organism>
<gene>
    <name evidence="1" type="primary">rpsM</name>
    <name evidence="1" type="synonym">rps13</name>
    <name type="ordered locus">P9515_17191</name>
</gene>
<keyword id="KW-0687">Ribonucleoprotein</keyword>
<keyword id="KW-0689">Ribosomal protein</keyword>
<keyword id="KW-0694">RNA-binding</keyword>
<keyword id="KW-0699">rRNA-binding</keyword>
<keyword id="KW-0820">tRNA-binding</keyword>
<reference key="1">
    <citation type="journal article" date="2007" name="PLoS Genet.">
        <title>Patterns and implications of gene gain and loss in the evolution of Prochlorococcus.</title>
        <authorList>
            <person name="Kettler G.C."/>
            <person name="Martiny A.C."/>
            <person name="Huang K."/>
            <person name="Zucker J."/>
            <person name="Coleman M.L."/>
            <person name="Rodrigue S."/>
            <person name="Chen F."/>
            <person name="Lapidus A."/>
            <person name="Ferriera S."/>
            <person name="Johnson J."/>
            <person name="Steglich C."/>
            <person name="Church G.M."/>
            <person name="Richardson P."/>
            <person name="Chisholm S.W."/>
        </authorList>
    </citation>
    <scope>NUCLEOTIDE SEQUENCE [LARGE SCALE GENOMIC DNA]</scope>
    <source>
        <strain>MIT 9515</strain>
    </source>
</reference>
<dbReference type="EMBL" id="CP000552">
    <property type="protein sequence ID" value="ABM72926.1"/>
    <property type="molecule type" value="Genomic_DNA"/>
</dbReference>
<dbReference type="RefSeq" id="WP_011821018.1">
    <property type="nucleotide sequence ID" value="NC_008817.1"/>
</dbReference>
<dbReference type="SMR" id="A2BYR5"/>
<dbReference type="STRING" id="167542.P9515_17191"/>
<dbReference type="GeneID" id="60202098"/>
<dbReference type="KEGG" id="pmc:P9515_17191"/>
<dbReference type="eggNOG" id="COG0099">
    <property type="taxonomic scope" value="Bacteria"/>
</dbReference>
<dbReference type="HOGENOM" id="CLU_103849_1_2_3"/>
<dbReference type="OrthoDB" id="9803610at2"/>
<dbReference type="Proteomes" id="UP000001589">
    <property type="component" value="Chromosome"/>
</dbReference>
<dbReference type="GO" id="GO:0005829">
    <property type="term" value="C:cytosol"/>
    <property type="evidence" value="ECO:0007669"/>
    <property type="project" value="TreeGrafter"/>
</dbReference>
<dbReference type="GO" id="GO:0015935">
    <property type="term" value="C:small ribosomal subunit"/>
    <property type="evidence" value="ECO:0007669"/>
    <property type="project" value="TreeGrafter"/>
</dbReference>
<dbReference type="GO" id="GO:0019843">
    <property type="term" value="F:rRNA binding"/>
    <property type="evidence" value="ECO:0007669"/>
    <property type="project" value="UniProtKB-UniRule"/>
</dbReference>
<dbReference type="GO" id="GO:0003735">
    <property type="term" value="F:structural constituent of ribosome"/>
    <property type="evidence" value="ECO:0007669"/>
    <property type="project" value="InterPro"/>
</dbReference>
<dbReference type="GO" id="GO:0000049">
    <property type="term" value="F:tRNA binding"/>
    <property type="evidence" value="ECO:0007669"/>
    <property type="project" value="UniProtKB-UniRule"/>
</dbReference>
<dbReference type="GO" id="GO:0006412">
    <property type="term" value="P:translation"/>
    <property type="evidence" value="ECO:0007669"/>
    <property type="project" value="UniProtKB-UniRule"/>
</dbReference>
<dbReference type="FunFam" id="1.10.8.50:FF:000001">
    <property type="entry name" value="30S ribosomal protein S13"/>
    <property type="match status" value="1"/>
</dbReference>
<dbReference type="Gene3D" id="1.10.8.50">
    <property type="match status" value="1"/>
</dbReference>
<dbReference type="Gene3D" id="4.10.910.10">
    <property type="entry name" value="30s ribosomal protein s13, domain 2"/>
    <property type="match status" value="1"/>
</dbReference>
<dbReference type="HAMAP" id="MF_01315">
    <property type="entry name" value="Ribosomal_uS13"/>
    <property type="match status" value="1"/>
</dbReference>
<dbReference type="InterPro" id="IPR027437">
    <property type="entry name" value="Rbsml_uS13_C"/>
</dbReference>
<dbReference type="InterPro" id="IPR001892">
    <property type="entry name" value="Ribosomal_uS13"/>
</dbReference>
<dbReference type="InterPro" id="IPR010979">
    <property type="entry name" value="Ribosomal_uS13-like_H2TH"/>
</dbReference>
<dbReference type="InterPro" id="IPR019980">
    <property type="entry name" value="Ribosomal_uS13_bac-type"/>
</dbReference>
<dbReference type="InterPro" id="IPR018269">
    <property type="entry name" value="Ribosomal_uS13_CS"/>
</dbReference>
<dbReference type="NCBIfam" id="TIGR03631">
    <property type="entry name" value="uS13_bact"/>
    <property type="match status" value="1"/>
</dbReference>
<dbReference type="PANTHER" id="PTHR10871">
    <property type="entry name" value="30S RIBOSOMAL PROTEIN S13/40S RIBOSOMAL PROTEIN S18"/>
    <property type="match status" value="1"/>
</dbReference>
<dbReference type="PANTHER" id="PTHR10871:SF1">
    <property type="entry name" value="SMALL RIBOSOMAL SUBUNIT PROTEIN US13M"/>
    <property type="match status" value="1"/>
</dbReference>
<dbReference type="Pfam" id="PF00416">
    <property type="entry name" value="Ribosomal_S13"/>
    <property type="match status" value="2"/>
</dbReference>
<dbReference type="PIRSF" id="PIRSF002134">
    <property type="entry name" value="Ribosomal_S13"/>
    <property type="match status" value="1"/>
</dbReference>
<dbReference type="SUPFAM" id="SSF46946">
    <property type="entry name" value="S13-like H2TH domain"/>
    <property type="match status" value="1"/>
</dbReference>
<dbReference type="PROSITE" id="PS00646">
    <property type="entry name" value="RIBOSOMAL_S13_1"/>
    <property type="match status" value="1"/>
</dbReference>
<dbReference type="PROSITE" id="PS50159">
    <property type="entry name" value="RIBOSOMAL_S13_2"/>
    <property type="match status" value="1"/>
</dbReference>
<name>RS13_PROM5</name>
<feature type="chain" id="PRO_0000306677" description="Small ribosomal subunit protein uS13">
    <location>
        <begin position="1"/>
        <end position="121"/>
    </location>
</feature>
<feature type="region of interest" description="Disordered" evidence="2">
    <location>
        <begin position="91"/>
        <end position="121"/>
    </location>
</feature>
<feature type="compositionally biased region" description="Basic residues" evidence="2">
    <location>
        <begin position="100"/>
        <end position="121"/>
    </location>
</feature>
<comment type="function">
    <text evidence="1">Located at the top of the head of the 30S subunit, it contacts several helices of the 16S rRNA. In the 70S ribosome it contacts the 23S rRNA (bridge B1a) and protein L5 of the 50S subunit (bridge B1b), connecting the 2 subunits; these bridges are implicated in subunit movement. Contacts the tRNAs in the A and P-sites.</text>
</comment>
<comment type="subunit">
    <text evidence="1">Part of the 30S ribosomal subunit. Forms a loose heterodimer with protein S19. Forms two bridges to the 50S subunit in the 70S ribosome.</text>
</comment>
<comment type="similarity">
    <text evidence="1">Belongs to the universal ribosomal protein uS13 family.</text>
</comment>